<organism>
    <name type="scientific">Zygosaccharomyces rouxii (strain ATCC 2623 / CBS 732 / NBRC 1130 / NCYC 568 / NRRL Y-229)</name>
    <dbReference type="NCBI Taxonomy" id="559307"/>
    <lineage>
        <taxon>Eukaryota</taxon>
        <taxon>Fungi</taxon>
        <taxon>Dikarya</taxon>
        <taxon>Ascomycota</taxon>
        <taxon>Saccharomycotina</taxon>
        <taxon>Saccharomycetes</taxon>
        <taxon>Saccharomycetales</taxon>
        <taxon>Saccharomycetaceae</taxon>
        <taxon>Zygosaccharomyces</taxon>
    </lineage>
</organism>
<accession>C5DT56</accession>
<dbReference type="EMBL" id="CU928175">
    <property type="protein sequence ID" value="CAR26967.1"/>
    <property type="molecule type" value="Genomic_DNA"/>
</dbReference>
<dbReference type="RefSeq" id="XP_002495900.1">
    <property type="nucleotide sequence ID" value="XM_002495855.1"/>
</dbReference>
<dbReference type="SMR" id="C5DT56"/>
<dbReference type="FunCoup" id="C5DT56">
    <property type="interactions" value="131"/>
</dbReference>
<dbReference type="STRING" id="559307.C5DT56"/>
<dbReference type="GeneID" id="8203100"/>
<dbReference type="KEGG" id="zro:ZYRO0C05632g"/>
<dbReference type="HOGENOM" id="CLU_711875_0_0_1"/>
<dbReference type="InParanoid" id="C5DT56"/>
<dbReference type="Proteomes" id="UP000008536">
    <property type="component" value="Chromosome C"/>
</dbReference>
<dbReference type="GO" id="GO:0005737">
    <property type="term" value="C:cytoplasm"/>
    <property type="evidence" value="ECO:0007669"/>
    <property type="project" value="UniProtKB-KW"/>
</dbReference>
<dbReference type="GO" id="GO:0005816">
    <property type="term" value="C:spindle pole body"/>
    <property type="evidence" value="ECO:0007669"/>
    <property type="project" value="UniProtKB-SubCell"/>
</dbReference>
<dbReference type="InterPro" id="IPR029330">
    <property type="entry name" value="Bbp1_C"/>
</dbReference>
<dbReference type="InterPro" id="IPR029328">
    <property type="entry name" value="Bbp1_N"/>
</dbReference>
<dbReference type="Pfam" id="PF15272">
    <property type="entry name" value="BBP1_C"/>
    <property type="match status" value="1"/>
</dbReference>
<dbReference type="Pfam" id="PF15271">
    <property type="entry name" value="BBP1_N"/>
    <property type="match status" value="1"/>
</dbReference>
<feature type="chain" id="PRO_0000409184" description="Spindle pole component BBP1">
    <location>
        <begin position="1"/>
        <end position="362"/>
    </location>
</feature>
<feature type="region of interest" description="Disordered" evidence="3">
    <location>
        <begin position="50"/>
        <end position="71"/>
    </location>
</feature>
<feature type="region of interest" description="Disordered" evidence="3">
    <location>
        <begin position="87"/>
        <end position="123"/>
    </location>
</feature>
<feature type="coiled-coil region" evidence="2">
    <location>
        <begin position="223"/>
        <end position="331"/>
    </location>
</feature>
<feature type="compositionally biased region" description="Basic and acidic residues" evidence="3">
    <location>
        <begin position="50"/>
        <end position="62"/>
    </location>
</feature>
<feature type="compositionally biased region" description="Low complexity" evidence="3">
    <location>
        <begin position="87"/>
        <end position="96"/>
    </location>
</feature>
<evidence type="ECO:0000250" key="1"/>
<evidence type="ECO:0000255" key="2"/>
<evidence type="ECO:0000256" key="3">
    <source>
        <dbReference type="SAM" id="MobiDB-lite"/>
    </source>
</evidence>
<evidence type="ECO:0000305" key="4"/>
<gene>
    <name type="primary">BBP1</name>
    <name type="ordered locus">ZYRO0C05632g</name>
</gene>
<keyword id="KW-0175">Coiled coil</keyword>
<keyword id="KW-0963">Cytoplasm</keyword>
<keyword id="KW-0206">Cytoskeleton</keyword>
<keyword id="KW-1185">Reference proteome</keyword>
<proteinExistence type="inferred from homology"/>
<comment type="function">
    <text evidence="1">Component of the spindle pole body (SPB) required for insertion of the nascent SPB into the nuclear envelope and for the proper execution of spindle pole body (SPB) duplication. Connects the central plaque of the SPB with the half-bridge. Required for proper localization of CDC5 at the SPB and for proper M-phase progression (By similarity).</text>
</comment>
<comment type="subunit">
    <text evidence="1">Homodimer.</text>
</comment>
<comment type="subcellular location">
    <subcellularLocation>
        <location evidence="1">Cytoplasm</location>
        <location evidence="1">Cytoskeleton</location>
        <location evidence="1">Microtubule organizing center</location>
        <location evidence="1">Spindle pole body</location>
    </subcellularLocation>
    <text evidence="1">Associates with the periphary of the central plaque.</text>
</comment>
<comment type="similarity">
    <text evidence="4">Belongs to the BBP1 family.</text>
</comment>
<protein>
    <recommendedName>
        <fullName>Spindle pole component BBP1</fullName>
    </recommendedName>
</protein>
<name>BBP1_ZYGRC</name>
<reference key="1">
    <citation type="journal article" date="2009" name="Genome Res.">
        <title>Comparative genomics of protoploid Saccharomycetaceae.</title>
        <authorList>
            <consortium name="The Genolevures Consortium"/>
            <person name="Souciet J.-L."/>
            <person name="Dujon B."/>
            <person name="Gaillardin C."/>
            <person name="Johnston M."/>
            <person name="Baret P.V."/>
            <person name="Cliften P."/>
            <person name="Sherman D.J."/>
            <person name="Weissenbach J."/>
            <person name="Westhof E."/>
            <person name="Wincker P."/>
            <person name="Jubin C."/>
            <person name="Poulain J."/>
            <person name="Barbe V."/>
            <person name="Segurens B."/>
            <person name="Artiguenave F."/>
            <person name="Anthouard V."/>
            <person name="Vacherie B."/>
            <person name="Val M.-E."/>
            <person name="Fulton R.S."/>
            <person name="Minx P."/>
            <person name="Wilson R."/>
            <person name="Durrens P."/>
            <person name="Jean G."/>
            <person name="Marck C."/>
            <person name="Martin T."/>
            <person name="Nikolski M."/>
            <person name="Rolland T."/>
            <person name="Seret M.-L."/>
            <person name="Casaregola S."/>
            <person name="Despons L."/>
            <person name="Fairhead C."/>
            <person name="Fischer G."/>
            <person name="Lafontaine I."/>
            <person name="Leh V."/>
            <person name="Lemaire M."/>
            <person name="de Montigny J."/>
            <person name="Neuveglise C."/>
            <person name="Thierry A."/>
            <person name="Blanc-Lenfle I."/>
            <person name="Bleykasten C."/>
            <person name="Diffels J."/>
            <person name="Fritsch E."/>
            <person name="Frangeul L."/>
            <person name="Goeffon A."/>
            <person name="Jauniaux N."/>
            <person name="Kachouri-Lafond R."/>
            <person name="Payen C."/>
            <person name="Potier S."/>
            <person name="Pribylova L."/>
            <person name="Ozanne C."/>
            <person name="Richard G.-F."/>
            <person name="Sacerdot C."/>
            <person name="Straub M.-L."/>
            <person name="Talla E."/>
        </authorList>
    </citation>
    <scope>NUCLEOTIDE SEQUENCE [LARGE SCALE GENOMIC DNA]</scope>
    <source>
        <strain>ATCC 2623 / CBS 732 / BCRC 21506 / NBRC 1130 / NCYC 568 / NRRL Y-229</strain>
    </source>
</reference>
<sequence length="362" mass="42097">MSSEQVDENTSGGIHGLYRWTMDALFGSRVSPSRKYREFAQDDTNYKSRDELFKGSYKDGNSRGRSNSWSGLDPNFYRRHDLLPLEESQSSSKSSLMDPVDLHPRAPASPVLDTTDTFGAKKGSWRRSESTIEFKSPSADDPVVSRLFEKRKPRHKENVITQRLAPQIPGKFPSPVKGPSSDYTSEYLEILNQLDRNGRALQEVNRGLWERCEQRQRQEKSYRDSYRETRAELINELKQSRKLYDNYYKLYGKYQQLKAISKETLDLQSKVNNLESELVDTAIKKEKQIHDLHKQLFQAELRAQEAESRRQRDAIAYESRIADLQRQLENRYRPSSPVSYRDQSTLSDYNASVDTQFLKNLV</sequence>